<evidence type="ECO:0000250" key="1">
    <source>
        <dbReference type="UniProtKB" id="P14921"/>
    </source>
</evidence>
<evidence type="ECO:0000255" key="2">
    <source>
        <dbReference type="PROSITE-ProRule" id="PRU00237"/>
    </source>
</evidence>
<evidence type="ECO:0000255" key="3">
    <source>
        <dbReference type="PROSITE-ProRule" id="PRU00762"/>
    </source>
</evidence>
<evidence type="ECO:0000269" key="4">
    <source>
    </source>
</evidence>
<evidence type="ECO:0000269" key="5">
    <source>
    </source>
</evidence>
<evidence type="ECO:0000269" key="6">
    <source>
    </source>
</evidence>
<evidence type="ECO:0000269" key="7">
    <source>
    </source>
</evidence>
<evidence type="ECO:0000269" key="8">
    <source>
    </source>
</evidence>
<evidence type="ECO:0000269" key="9">
    <source>
    </source>
</evidence>
<evidence type="ECO:0000269" key="10">
    <source>
    </source>
</evidence>
<evidence type="ECO:0000303" key="11">
    <source ref="1"/>
</evidence>
<evidence type="ECO:0000305" key="12"/>
<evidence type="ECO:0007744" key="13">
    <source>
        <dbReference type="PDB" id="1R36"/>
    </source>
</evidence>
<evidence type="ECO:0007744" key="14">
    <source>
    </source>
</evidence>
<evidence type="ECO:0007829" key="15">
    <source>
        <dbReference type="PDB" id="1K78"/>
    </source>
</evidence>
<evidence type="ECO:0007829" key="16">
    <source>
        <dbReference type="PDB" id="1MD0"/>
    </source>
</evidence>
<evidence type="ECO:0007829" key="17">
    <source>
        <dbReference type="PDB" id="1R36"/>
    </source>
</evidence>
<evidence type="ECO:0007829" key="18">
    <source>
        <dbReference type="PDB" id="2JV3"/>
    </source>
</evidence>
<proteinExistence type="evidence at protein level"/>
<protein>
    <recommendedName>
        <fullName>Protein C-ets-1</fullName>
    </recommendedName>
    <alternativeName>
        <fullName>p54</fullName>
    </alternativeName>
</protein>
<sequence length="440" mass="50202">MKAAVDLKPTLTIIKTEKVDLELFPSPDMECADVPLLTPSSKEMMSQALKATFSGFTKEQQRLGIPKDPRQWTETHVRDWVMWAVNEFSLKGVDFQKFCMSGAALCALGKECFLELAPDFVGDILWEHLEILQKEDVKPYQVNGANPTYPESCYTSDYFISYGIEHAQCVPPSEFSEPSFITESYQTLHPISSEELLSLKYENDYPSVILQDPLQTDTLQTDYFAIKQEVLTPDNMCLGRASRGKLGGQDSFESVESYDSCDRLTQSWSSQSSFNSLQRVPSYDSFDYEDYPAALPNHKPKGTFKDYVRDRADLNKDKPVIPAAALAGYTGSGPIQLWQFLLELLTDKSCQSFISWTGDGWEFKLSDPDEVARRWGKRKNKPKMNYEKLSRGLRYYYDKNIIHKTAGKRYVYRFVCDLQSLLGYTPEELHAMLDVKPDAD</sequence>
<dbReference type="EMBL" id="M58482">
    <property type="protein sequence ID" value="AAA63299.1"/>
    <property type="molecule type" value="mRNA"/>
</dbReference>
<dbReference type="EMBL" id="X53953">
    <property type="protein sequence ID" value="CAA37904.1"/>
    <property type="molecule type" value="mRNA"/>
</dbReference>
<dbReference type="EMBL" id="X55787">
    <property type="protein sequence ID" value="CAA39310.1"/>
    <property type="molecule type" value="mRNA"/>
</dbReference>
<dbReference type="EMBL" id="BC010588">
    <property type="protein sequence ID" value="AAH10588.1"/>
    <property type="molecule type" value="mRNA"/>
</dbReference>
<dbReference type="CCDS" id="CCDS22954.1">
    <molecule id="P27577-1"/>
</dbReference>
<dbReference type="PIR" id="A30487">
    <property type="entry name" value="A35875"/>
</dbReference>
<dbReference type="PIR" id="I48291">
    <property type="entry name" value="I48291"/>
</dbReference>
<dbReference type="RefSeq" id="NP_035938.2">
    <molecule id="P27577-1"/>
    <property type="nucleotide sequence ID" value="NM_011808.3"/>
</dbReference>
<dbReference type="PDB" id="1K78">
    <property type="method" value="X-ray"/>
    <property type="resolution" value="2.25 A"/>
    <property type="chains" value="B/F=331-440"/>
</dbReference>
<dbReference type="PDB" id="1K79">
    <property type="method" value="X-ray"/>
    <property type="resolution" value="2.40 A"/>
    <property type="chains" value="A/D=331-440"/>
</dbReference>
<dbReference type="PDB" id="1K7A">
    <property type="method" value="X-ray"/>
    <property type="resolution" value="2.80 A"/>
    <property type="chains" value="A/D=331-440"/>
</dbReference>
<dbReference type="PDB" id="1MD0">
    <property type="method" value="X-ray"/>
    <property type="resolution" value="2.00 A"/>
    <property type="chains" value="A/B=300-440"/>
</dbReference>
<dbReference type="PDB" id="1MDM">
    <property type="method" value="X-ray"/>
    <property type="resolution" value="2.80 A"/>
    <property type="chains" value="B=280-440"/>
</dbReference>
<dbReference type="PDB" id="1R36">
    <property type="method" value="NMR"/>
    <property type="chains" value="A=301-440"/>
</dbReference>
<dbReference type="PDB" id="2JV3">
    <property type="method" value="NMR"/>
    <property type="chains" value="A=29-138"/>
</dbReference>
<dbReference type="PDB" id="2KMD">
    <property type="method" value="NMR"/>
    <property type="chains" value="A=29-138"/>
</dbReference>
<dbReference type="PDB" id="6DA1">
    <property type="method" value="X-ray"/>
    <property type="resolution" value="2.00 A"/>
    <property type="chains" value="A/B=301-440"/>
</dbReference>
<dbReference type="PDB" id="6DAT">
    <property type="method" value="X-ray"/>
    <property type="resolution" value="2.35 A"/>
    <property type="chains" value="A/B/C/D=301-440"/>
</dbReference>
<dbReference type="PDBsum" id="1K78"/>
<dbReference type="PDBsum" id="1K79"/>
<dbReference type="PDBsum" id="1K7A"/>
<dbReference type="PDBsum" id="1MD0"/>
<dbReference type="PDBsum" id="1MDM"/>
<dbReference type="PDBsum" id="1R36"/>
<dbReference type="PDBsum" id="2JV3"/>
<dbReference type="PDBsum" id="2KMD"/>
<dbReference type="PDBsum" id="6DA1"/>
<dbReference type="PDBsum" id="6DAT"/>
<dbReference type="BMRB" id="P27577"/>
<dbReference type="SMR" id="P27577"/>
<dbReference type="BioGRID" id="204765">
    <property type="interactions" value="5"/>
</dbReference>
<dbReference type="DIP" id="DIP-41848N"/>
<dbReference type="FunCoup" id="P27577">
    <property type="interactions" value="1741"/>
</dbReference>
<dbReference type="IntAct" id="P27577">
    <property type="interactions" value="5"/>
</dbReference>
<dbReference type="STRING" id="10090.ENSMUSP00000034534"/>
<dbReference type="iPTMnet" id="P27577"/>
<dbReference type="PhosphoSitePlus" id="P27577"/>
<dbReference type="SwissPalm" id="P27577"/>
<dbReference type="jPOST" id="P27577"/>
<dbReference type="PaxDb" id="10090-ENSMUSP00000034534"/>
<dbReference type="ProteomicsDB" id="275486">
    <molecule id="P27577-1"/>
</dbReference>
<dbReference type="Pumba" id="P27577"/>
<dbReference type="Antibodypedia" id="3750">
    <property type="antibodies" value="795 antibodies from 42 providers"/>
</dbReference>
<dbReference type="DNASU" id="23871"/>
<dbReference type="Ensembl" id="ENSMUST00000034534.13">
    <molecule id="P27577-1"/>
    <property type="protein sequence ID" value="ENSMUSP00000034534.6"/>
    <property type="gene ID" value="ENSMUSG00000032035.17"/>
</dbReference>
<dbReference type="GeneID" id="23871"/>
<dbReference type="KEGG" id="mmu:23871"/>
<dbReference type="UCSC" id="uc009osb.1">
    <molecule id="P27577-1"/>
    <property type="organism name" value="mouse"/>
</dbReference>
<dbReference type="AGR" id="MGI:95455"/>
<dbReference type="CTD" id="2113"/>
<dbReference type="MGI" id="MGI:95455">
    <property type="gene designation" value="Ets1"/>
</dbReference>
<dbReference type="VEuPathDB" id="HostDB:ENSMUSG00000032035"/>
<dbReference type="eggNOG" id="KOG3806">
    <property type="taxonomic scope" value="Eukaryota"/>
</dbReference>
<dbReference type="GeneTree" id="ENSGT00940000159519"/>
<dbReference type="InParanoid" id="P27577"/>
<dbReference type="OMA" id="DPWMTCG"/>
<dbReference type="PhylomeDB" id="P27577"/>
<dbReference type="TreeFam" id="TF316214"/>
<dbReference type="Reactome" id="R-MMU-2559585">
    <property type="pathway name" value="Oncogene Induced Senescence"/>
</dbReference>
<dbReference type="BioGRID-ORCS" id="23871">
    <property type="hits" value="1 hit in 82 CRISPR screens"/>
</dbReference>
<dbReference type="ChiTaRS" id="Ets1">
    <property type="organism name" value="mouse"/>
</dbReference>
<dbReference type="EvolutionaryTrace" id="P27577"/>
<dbReference type="PRO" id="PR:P27577"/>
<dbReference type="Proteomes" id="UP000000589">
    <property type="component" value="Chromosome 9"/>
</dbReference>
<dbReference type="RNAct" id="P27577">
    <property type="molecule type" value="protein"/>
</dbReference>
<dbReference type="Bgee" id="ENSMUSG00000032035">
    <property type="expression patterns" value="Expressed in peripheral lymph node and 300 other cell types or tissues"/>
</dbReference>
<dbReference type="ExpressionAtlas" id="P27577">
    <property type="expression patterns" value="baseline and differential"/>
</dbReference>
<dbReference type="GO" id="GO:0005737">
    <property type="term" value="C:cytoplasm"/>
    <property type="evidence" value="ECO:0007669"/>
    <property type="project" value="UniProtKB-SubCell"/>
</dbReference>
<dbReference type="GO" id="GO:0005634">
    <property type="term" value="C:nucleus"/>
    <property type="evidence" value="ECO:0000314"/>
    <property type="project" value="MGI"/>
</dbReference>
<dbReference type="GO" id="GO:0005667">
    <property type="term" value="C:transcription regulator complex"/>
    <property type="evidence" value="ECO:0000314"/>
    <property type="project" value="MGI"/>
</dbReference>
<dbReference type="GO" id="GO:0003677">
    <property type="term" value="F:DNA binding"/>
    <property type="evidence" value="ECO:0000314"/>
    <property type="project" value="UniProtKB"/>
</dbReference>
<dbReference type="GO" id="GO:0003700">
    <property type="term" value="F:DNA-binding transcription factor activity"/>
    <property type="evidence" value="ECO:0000314"/>
    <property type="project" value="MGI"/>
</dbReference>
<dbReference type="GO" id="GO:0140297">
    <property type="term" value="F:DNA-binding transcription factor binding"/>
    <property type="evidence" value="ECO:0000353"/>
    <property type="project" value="UniProtKB"/>
</dbReference>
<dbReference type="GO" id="GO:0003676">
    <property type="term" value="F:nucleic acid binding"/>
    <property type="evidence" value="ECO:0000269"/>
    <property type="project" value="DisProt"/>
</dbReference>
<dbReference type="GO" id="GO:0043565">
    <property type="term" value="F:sequence-specific DNA binding"/>
    <property type="evidence" value="ECO:0000314"/>
    <property type="project" value="MGI"/>
</dbReference>
<dbReference type="GO" id="GO:1990837">
    <property type="term" value="F:sequence-specific double-stranded DNA binding"/>
    <property type="evidence" value="ECO:0000315"/>
    <property type="project" value="CAFA"/>
</dbReference>
<dbReference type="GO" id="GO:0002376">
    <property type="term" value="P:immune system process"/>
    <property type="evidence" value="ECO:0007669"/>
    <property type="project" value="UniProtKB-KW"/>
</dbReference>
<dbReference type="GO" id="GO:0050728">
    <property type="term" value="P:negative regulation of inflammatory response"/>
    <property type="evidence" value="ECO:0000315"/>
    <property type="project" value="CACAO"/>
</dbReference>
<dbReference type="GO" id="GO:0045893">
    <property type="term" value="P:positive regulation of DNA-templated transcription"/>
    <property type="evidence" value="ECO:0000250"/>
    <property type="project" value="UniProtKB"/>
</dbReference>
<dbReference type="GO" id="GO:0010595">
    <property type="term" value="P:positive regulation of endothelial cell migration"/>
    <property type="evidence" value="ECO:0000250"/>
    <property type="project" value="UniProtKB"/>
</dbReference>
<dbReference type="GO" id="GO:0045648">
    <property type="term" value="P:positive regulation of erythrocyte differentiation"/>
    <property type="evidence" value="ECO:0000250"/>
    <property type="project" value="UniProtKB"/>
</dbReference>
<dbReference type="GO" id="GO:0045944">
    <property type="term" value="P:positive regulation of transcription by RNA polymerase II"/>
    <property type="evidence" value="ECO:0000314"/>
    <property type="project" value="NTNU_SB"/>
</dbReference>
<dbReference type="GO" id="GO:0045765">
    <property type="term" value="P:regulation of angiogenesis"/>
    <property type="evidence" value="ECO:0000250"/>
    <property type="project" value="UniProtKB"/>
</dbReference>
<dbReference type="GO" id="GO:0006357">
    <property type="term" value="P:regulation of transcription by RNA polymerase II"/>
    <property type="evidence" value="ECO:0000314"/>
    <property type="project" value="MGI"/>
</dbReference>
<dbReference type="CDD" id="cd08542">
    <property type="entry name" value="SAM_PNT-ETS-1"/>
    <property type="match status" value="1"/>
</dbReference>
<dbReference type="DisProt" id="DP00111"/>
<dbReference type="FunFam" id="1.10.10.10:FF:000097">
    <property type="entry name" value="Protein c-ets-1 isoform 1"/>
    <property type="match status" value="1"/>
</dbReference>
<dbReference type="FunFam" id="1.10.150.50:FF:000014">
    <property type="entry name" value="Protein c-ets-1 isoform 1"/>
    <property type="match status" value="1"/>
</dbReference>
<dbReference type="Gene3D" id="1.10.150.50">
    <property type="entry name" value="Transcription Factor, Ets-1"/>
    <property type="match status" value="1"/>
</dbReference>
<dbReference type="Gene3D" id="1.10.10.10">
    <property type="entry name" value="Winged helix-like DNA-binding domain superfamily/Winged helix DNA-binding domain"/>
    <property type="match status" value="1"/>
</dbReference>
<dbReference type="IDEAL" id="IID50005"/>
<dbReference type="InterPro" id="IPR045688">
    <property type="entry name" value="Ets1_N_flank"/>
</dbReference>
<dbReference type="InterPro" id="IPR000418">
    <property type="entry name" value="Ets_dom"/>
</dbReference>
<dbReference type="InterPro" id="IPR046328">
    <property type="entry name" value="ETS_fam"/>
</dbReference>
<dbReference type="InterPro" id="IPR003118">
    <property type="entry name" value="Pointed_dom"/>
</dbReference>
<dbReference type="InterPro" id="IPR013761">
    <property type="entry name" value="SAM/pointed_sf"/>
</dbReference>
<dbReference type="InterPro" id="IPR041886">
    <property type="entry name" value="SAM_PNT-ETS-1"/>
</dbReference>
<dbReference type="InterPro" id="IPR016311">
    <property type="entry name" value="Transform_prot_C-ets"/>
</dbReference>
<dbReference type="InterPro" id="IPR036388">
    <property type="entry name" value="WH-like_DNA-bd_sf"/>
</dbReference>
<dbReference type="InterPro" id="IPR036390">
    <property type="entry name" value="WH_DNA-bd_sf"/>
</dbReference>
<dbReference type="PANTHER" id="PTHR11849">
    <property type="entry name" value="ETS"/>
    <property type="match status" value="1"/>
</dbReference>
<dbReference type="PANTHER" id="PTHR11849:SF314">
    <property type="entry name" value="PROTEIN C-ETS-1"/>
    <property type="match status" value="1"/>
</dbReference>
<dbReference type="Pfam" id="PF00178">
    <property type="entry name" value="Ets"/>
    <property type="match status" value="1"/>
</dbReference>
<dbReference type="Pfam" id="PF19525">
    <property type="entry name" value="Ets1_N_flank"/>
    <property type="match status" value="1"/>
</dbReference>
<dbReference type="Pfam" id="PF02198">
    <property type="entry name" value="SAM_PNT"/>
    <property type="match status" value="1"/>
</dbReference>
<dbReference type="PIRSF" id="PIRSF001698">
    <property type="entry name" value="Transforming_factor_C-ets"/>
    <property type="match status" value="1"/>
</dbReference>
<dbReference type="PRINTS" id="PR00454">
    <property type="entry name" value="ETSDOMAIN"/>
</dbReference>
<dbReference type="SMART" id="SM00413">
    <property type="entry name" value="ETS"/>
    <property type="match status" value="1"/>
</dbReference>
<dbReference type="SMART" id="SM00251">
    <property type="entry name" value="SAM_PNT"/>
    <property type="match status" value="1"/>
</dbReference>
<dbReference type="SUPFAM" id="SSF47769">
    <property type="entry name" value="SAM/Pointed domain"/>
    <property type="match status" value="1"/>
</dbReference>
<dbReference type="SUPFAM" id="SSF46785">
    <property type="entry name" value="Winged helix' DNA-binding domain"/>
    <property type="match status" value="1"/>
</dbReference>
<dbReference type="PROSITE" id="PS00345">
    <property type="entry name" value="ETS_DOMAIN_1"/>
    <property type="match status" value="1"/>
</dbReference>
<dbReference type="PROSITE" id="PS00346">
    <property type="entry name" value="ETS_DOMAIN_2"/>
    <property type="match status" value="1"/>
</dbReference>
<dbReference type="PROSITE" id="PS50061">
    <property type="entry name" value="ETS_DOMAIN_3"/>
    <property type="match status" value="1"/>
</dbReference>
<dbReference type="PROSITE" id="PS51433">
    <property type="entry name" value="PNT"/>
    <property type="match status" value="1"/>
</dbReference>
<organism>
    <name type="scientific">Mus musculus</name>
    <name type="common">Mouse</name>
    <dbReference type="NCBI Taxonomy" id="10090"/>
    <lineage>
        <taxon>Eukaryota</taxon>
        <taxon>Metazoa</taxon>
        <taxon>Chordata</taxon>
        <taxon>Craniata</taxon>
        <taxon>Vertebrata</taxon>
        <taxon>Euteleostomi</taxon>
        <taxon>Mammalia</taxon>
        <taxon>Eutheria</taxon>
        <taxon>Euarchontoglires</taxon>
        <taxon>Glires</taxon>
        <taxon>Rodentia</taxon>
        <taxon>Myomorpha</taxon>
        <taxon>Muroidea</taxon>
        <taxon>Muridae</taxon>
        <taxon>Murinae</taxon>
        <taxon>Mus</taxon>
        <taxon>Mus</taxon>
    </lineage>
</organism>
<keyword id="KW-0002">3D-structure</keyword>
<keyword id="KW-0007">Acetylation</keyword>
<keyword id="KW-0025">Alternative splicing</keyword>
<keyword id="KW-0963">Cytoplasm</keyword>
<keyword id="KW-0238">DNA-binding</keyword>
<keyword id="KW-0391">Immunity</keyword>
<keyword id="KW-1017">Isopeptide bond</keyword>
<keyword id="KW-0539">Nucleus</keyword>
<keyword id="KW-0597">Phosphoprotein</keyword>
<keyword id="KW-0656">Proto-oncogene</keyword>
<keyword id="KW-1185">Reference proteome</keyword>
<keyword id="KW-0804">Transcription</keyword>
<keyword id="KW-0805">Transcription regulation</keyword>
<keyword id="KW-0832">Ubl conjugation</keyword>
<gene>
    <name type="primary">Ets1</name>
    <name evidence="11" type="synonym">Ets-1</name>
</gene>
<comment type="function">
    <text evidence="1 7">Transcription factor (PubMed:15994560). Directly controls the expression of cytokine and chemokine genes in a wide variety of different cellular contexts (By similarity). May control the differentiation, survival and proliferation of lymphoid cells (By similarity). May also regulate angiogenesis through regulation of expression of genes controlling endothelial cell migration and invasion (By similarity).</text>
</comment>
<comment type="activity regulation">
    <text evidence="6 7">Autoinhibited by a module composed of four alpha helices (HI-1, HI-2, H4, and H5) that flank the DNA-binding ETS domain, reducing the affinity for DNA (PubMed:15591056, PubMed:15994560). Phosphorylation by CaMK2/CaMKII in response to calcium signaling decreases affinity for DNA (PubMed:15994560).</text>
</comment>
<comment type="subunit">
    <text evidence="1 4 5 6 9">Binds DNA as a homodimer; homodimerization is required for transcription activation (PubMed:15591056). Interacts with MAF and MAFB (PubMed:10790365, PubMed:9566892). Interacts with PAX5; the interaction alters DNA-binding properties (PubMed:11779502). Interacts with DAXX. Interacts with UBE2I. Interacts with SP100; the interaction is direct and modulates ETS1 transcriptional activity (By similarity).</text>
</comment>
<comment type="interaction">
    <interactant intactId="EBI-4289053">
        <id>P27577</id>
    </interactant>
    <interactant intactId="EBI-296306">
        <id>P45481</id>
        <label>Crebbp</label>
    </interactant>
    <organismsDiffer>false</organismsDiffer>
    <experiments>3</experiments>
</comment>
<comment type="interaction">
    <interactant intactId="EBI-4289053">
        <id>P27577</id>
    </interactant>
    <interactant intactId="EBI-2820655">
        <id>P31314</id>
        <label>TLX1</label>
    </interactant>
    <organismsDiffer>true</organismsDiffer>
    <experiments>2</experiments>
</comment>
<comment type="interaction">
    <interactant intactId="EBI-4289053">
        <id>P27577</id>
    </interactant>
    <interactant intactId="EBI-3939165">
        <id>O43711</id>
        <label>TLX3</label>
    </interactant>
    <organismsDiffer>true</organismsDiffer>
    <experiments>2</experiments>
</comment>
<comment type="subcellular location">
    <subcellularLocation>
        <location evidence="1">Nucleus</location>
    </subcellularLocation>
    <subcellularLocation>
        <location evidence="1">Cytoplasm</location>
    </subcellularLocation>
</comment>
<comment type="alternative products">
    <event type="alternative splicing"/>
    <isoform>
        <id>P27577-1</id>
        <name>1</name>
        <sequence type="displayed"/>
    </isoform>
    <text>At least 2 isoforms are produced.</text>
</comment>
<comment type="PTM">
    <text evidence="7">Phosphorylation at Ser-251, Ser-282 and Ser-285 by CaMK2/CaMKII in response to calcium signaling decreases affinity for DNA: an increasing number of phosphoserines causes DNA-binding to become progressively weaker.</text>
</comment>
<comment type="PTM">
    <text evidence="8">Sumoylated on Lys-15 and Lys-227, preferentially with SUMO2; which inhibits transcriptional activity.</text>
</comment>
<comment type="PTM">
    <text evidence="8">Ubiquitinated; which induces proteasomal degradation.</text>
</comment>
<comment type="similarity">
    <text evidence="12">Belongs to the ETS family.</text>
</comment>
<accession>P27577</accession>
<accession>Q61403</accession>
<name>ETS1_MOUSE</name>
<reference key="1">
    <citation type="book" date="1990" name="Oncogenesis">
        <title>The chicken, mouse and human ETS-1 proteins all have predicted masses of 50 kDa, but have different electrophoretic mobilities.</title>
        <editorList>
            <person name="Papas T.S."/>
        </editorList>
        <authorList>
            <person name="Watson D.K."/>
            <person name="Seth A."/>
            <person name="Smyth F.E."/>
            <person name="Schweinfest C.W."/>
            <person name="Papas T.S."/>
        </authorList>
    </citation>
    <scope>NUCLEOTIDE SEQUENCE [MRNA]</scope>
    <source>
        <strain>BALB/cJ</strain>
        <tissue>Fibroblast</tissue>
    </source>
</reference>
<reference key="2">
    <citation type="journal article" date="1990" name="Genes Dev.">
        <title>Sequence-specific DNA binding of the proto-oncoprotein ets-1 defines a transcriptional activator sequence within the long terminal repeat of the Moloney murine sarcoma virus.</title>
        <authorList>
            <person name="Gunther C.V."/>
            <person name="Nye J.A."/>
            <person name="Bryner R.S."/>
            <person name="Graves B.J."/>
        </authorList>
    </citation>
    <scope>NUCLEOTIDE SEQUENCE [MRNA]</scope>
    <source>
        <strain>BALB/cJ</strain>
        <tissue>Thymus</tissue>
    </source>
</reference>
<reference key="3">
    <citation type="journal article" date="1990" name="Oncogene Res.">
        <title>Cloning, sequencing, and expression of mouse c-ets-1 cDNA in baculovirus expression system.</title>
        <authorList>
            <person name="Chen J.H."/>
        </authorList>
    </citation>
    <scope>NUCLEOTIDE SEQUENCE [MRNA]</scope>
    <source>
        <strain>BALB/cJ</strain>
        <tissue>Thymus</tissue>
    </source>
</reference>
<reference key="4">
    <citation type="journal article" date="2004" name="Genome Res.">
        <title>The status, quality, and expansion of the NIH full-length cDNA project: the Mammalian Gene Collection (MGC).</title>
        <authorList>
            <consortium name="The MGC Project Team"/>
        </authorList>
    </citation>
    <scope>NUCLEOTIDE SEQUENCE [LARGE SCALE MRNA]</scope>
    <source>
        <strain>Czech II</strain>
        <tissue>Mammary gland</tissue>
    </source>
</reference>
<reference key="5">
    <citation type="journal article" date="1998" name="Mol. Cell. Biol.">
        <title>c-Maf interacts with c-Myb to regulate transcription of an early myeloid gene during differentiation.</title>
        <authorList>
            <person name="Hedge S.P."/>
            <person name="Kumar A."/>
            <person name="Kurschner C."/>
            <person name="Shapiro L.H."/>
        </authorList>
    </citation>
    <scope>INTERACTION WITH MAF</scope>
</reference>
<reference key="6">
    <citation type="journal article" date="2000" name="EMBO J.">
        <title>MafB is an inducer of monocytic differentiation.</title>
        <authorList>
            <person name="Kelly L.M."/>
            <person name="Englmeier U."/>
            <person name="Lafon I."/>
            <person name="Sieweke M.H."/>
            <person name="Graf T."/>
        </authorList>
    </citation>
    <scope>INTERACTION WITH MAFB</scope>
</reference>
<reference key="7">
    <citation type="journal article" date="2005" name="Science">
        <title>Variable control of Ets-1 DNA binding by multiple phosphates in an unstructured region.</title>
        <authorList>
            <person name="Pufall M.A."/>
            <person name="Lee G.M."/>
            <person name="Nelson M.L."/>
            <person name="Kang H.S."/>
            <person name="Velyvis A."/>
            <person name="Kay L.E."/>
            <person name="McIntosh L.P."/>
            <person name="Graves B.J."/>
        </authorList>
    </citation>
    <scope>FUNCTION</scope>
    <scope>ACTIVITY REGULATION</scope>
    <scope>PHOSPHORYLATION AT SER-251; SER-282 AND SER-285</scope>
    <scope>MUTAGENESIS OF SER-251; SER-270; SER-273; 282-SER--SER-285 AND LEU-429</scope>
</reference>
<reference key="8">
    <citation type="journal article" date="2007" name="Oncogene">
        <title>Regulation of the Ets-1 transcription factor by sumoylation and ubiquitinylation.</title>
        <authorList>
            <person name="Ji Z."/>
            <person name="Degerny C."/>
            <person name="Vintonenko N."/>
            <person name="Deheuninck J."/>
            <person name="Foveau B."/>
            <person name="Leroy C."/>
            <person name="Coll J."/>
            <person name="Tulasne D."/>
            <person name="Baert J.-L."/>
            <person name="Fafeur V."/>
        </authorList>
    </citation>
    <scope>SUMOYLATION AT LYS-15 AND LYS-227</scope>
    <scope>UBIQUITINATION</scope>
</reference>
<reference key="9">
    <citation type="journal article" date="2010" name="Cell">
        <title>A tissue-specific atlas of mouse protein phosphorylation and expression.</title>
        <authorList>
            <person name="Huttlin E.L."/>
            <person name="Jedrychowski M.P."/>
            <person name="Elias J.E."/>
            <person name="Goswami T."/>
            <person name="Rad R."/>
            <person name="Beausoleil S.A."/>
            <person name="Villen J."/>
            <person name="Haas W."/>
            <person name="Sowa M.E."/>
            <person name="Gygi S.P."/>
        </authorList>
    </citation>
    <scope>PHOSPHORYLATION [LARGE SCALE ANALYSIS] AT SER-251; SER-254; SER-282 AND SER-285</scope>
    <scope>IDENTIFICATION BY MASS SPECTROMETRY [LARGE SCALE ANALYSIS]</scope>
    <source>
        <tissue>Kidney</tissue>
        <tissue>Lung</tissue>
        <tissue>Spleen</tissue>
    </source>
</reference>
<reference key="10">
    <citation type="journal article" date="1998" name="Proc. Natl. Acad. Sci. U.S.A.">
        <title>Structure of the ets-1 pointed domain and mitogen-activated protein kinase phosphorylation site.</title>
        <authorList>
            <person name="Slupsky C.M."/>
            <person name="Gentile L.N."/>
            <person name="Donaldson L.W."/>
            <person name="Mackereth C.D."/>
            <person name="Seidel J.J."/>
            <person name="Graves B.J."/>
            <person name="McIntosh L.P."/>
        </authorList>
    </citation>
    <scope>STRUCTURE BY NMR OF 29-138</scope>
    <scope>PHOSPHORYLATION AT THR-38</scope>
</reference>
<reference key="11">
    <citation type="journal article" date="1996" name="EMBO J.">
        <title>Solution structure of the ETS domain from murine Ets-1: a winged helix-turn-helix DNA binding motif.</title>
        <authorList>
            <person name="Donaldson L.W."/>
            <person name="Petersen J.M."/>
            <person name="Graves B.J."/>
            <person name="McIntosh L.P."/>
        </authorList>
    </citation>
    <scope>STRUCTURE BY NMR OF 332-415</scope>
</reference>
<reference key="12">
    <citation type="journal article" date="2001" name="Mol. Cell">
        <title>Structural studies of Ets-1/Pax5 complex formation on DNA.</title>
        <authorList>
            <person name="Garvie C.W."/>
            <person name="Hagman J."/>
            <person name="Wolberger C."/>
        </authorList>
    </citation>
    <scope>X-RAY CRYSTALLOGRAPHY (2.25 ANGSTROMS) OF 331-440 IN COMPLEX WITH HUMAN PAX5 AND DNA</scope>
</reference>
<reference evidence="13" key="13">
    <citation type="journal article" date="2005" name="J. Biol. Chem.">
        <title>The structural and dynamic basis of Ets-1 DNA binding autoinhibition.</title>
        <authorList>
            <person name="Lee G.M."/>
            <person name="Donaldson L.W."/>
            <person name="Pufall M.A."/>
            <person name="Kang H.S."/>
            <person name="Pot I."/>
            <person name="Graves B.J."/>
            <person name="McIntosh L.P."/>
        </authorList>
    </citation>
    <scope>STRUCTURE BY NMR OF 301-440</scope>
    <scope>SUBUNIT</scope>
    <scope>ACTIVITY REGULATION</scope>
</reference>
<feature type="chain" id="PRO_0000204070" description="Protein C-ets-1">
    <location>
        <begin position="1"/>
        <end position="440"/>
    </location>
</feature>
<feature type="domain" description="PNT" evidence="3">
    <location>
        <begin position="51"/>
        <end position="136"/>
    </location>
</feature>
<feature type="DNA-binding region" description="ETS" evidence="2">
    <location>
        <begin position="335"/>
        <end position="415"/>
    </location>
</feature>
<feature type="region of interest" description="Activation domain; required for transcription activation" evidence="1">
    <location>
        <begin position="130"/>
        <end position="243"/>
    </location>
</feature>
<feature type="region of interest" description="Helix HI-1" evidence="6">
    <location>
        <begin position="304"/>
        <end position="312"/>
    </location>
</feature>
<feature type="region of interest" description="Helix HI-2" evidence="6">
    <location>
        <begin position="323"/>
        <end position="330"/>
    </location>
</feature>
<feature type="region of interest" description="Helix H4" evidence="6">
    <location>
        <begin position="418"/>
        <end position="422"/>
    </location>
</feature>
<feature type="region of interest" description="Helix H5" evidence="6">
    <location>
        <begin position="426"/>
        <end position="432"/>
    </location>
</feature>
<feature type="modified residue" description="N6-acetyllysine; alternate" evidence="1">
    <location>
        <position position="8"/>
    </location>
</feature>
<feature type="modified residue" description="N6-acetyllysine; alternate" evidence="1">
    <location>
        <position position="15"/>
    </location>
</feature>
<feature type="modified residue" description="Phosphothreonine; by MAPK" evidence="10">
    <location>
        <position position="38"/>
    </location>
</feature>
<feature type="modified residue" description="Phosphotyrosine" evidence="1">
    <location>
        <position position="223"/>
    </location>
</feature>
<feature type="modified residue" description="Phosphoserine; by CaMK2" evidence="7 14">
    <location>
        <position position="251"/>
    </location>
</feature>
<feature type="modified residue" description="Phosphoserine" evidence="14">
    <location>
        <position position="254"/>
    </location>
</feature>
<feature type="modified residue" description="Phosphothreonine" evidence="1">
    <location>
        <position position="265"/>
    </location>
</feature>
<feature type="modified residue" description="Phosphoserine" evidence="1">
    <location>
        <position position="267"/>
    </location>
</feature>
<feature type="modified residue" description="Phosphoserine" evidence="1">
    <location>
        <position position="270"/>
    </location>
</feature>
<feature type="modified residue" description="Phosphoserine; by CaMK2" evidence="7 14">
    <location>
        <position position="282"/>
    </location>
</feature>
<feature type="modified residue" description="Phosphoserine; by CaMK2" evidence="7 14">
    <location>
        <position position="285"/>
    </location>
</feature>
<feature type="modified residue" description="N6-acetyllysine" evidence="1">
    <location>
        <position position="305"/>
    </location>
</feature>
<feature type="cross-link" description="Glycyl lysine isopeptide (Lys-Gly) (interchain with G-Cter in SUMO2); alternate" evidence="1">
    <location>
        <position position="8"/>
    </location>
</feature>
<feature type="cross-link" description="Glycyl lysine isopeptide (Lys-Gly) (interchain with G-Cter in SUMO); alternate">
    <location>
        <position position="15"/>
    </location>
</feature>
<feature type="cross-link" description="Glycyl lysine isopeptide (Lys-Gly) (interchain with G-Cter in SUMO2); alternate" evidence="1">
    <location>
        <position position="15"/>
    </location>
</feature>
<feature type="cross-link" description="Glycyl lysine isopeptide (Lys-Gly) (interchain with G-Cter in SUMO2)" evidence="1">
    <location>
        <position position="138"/>
    </location>
</feature>
<feature type="cross-link" description="Glycyl lysine isopeptide (Lys-Gly) (interchain with G-Cter in SUMO)" evidence="8">
    <location>
        <position position="227"/>
    </location>
</feature>
<feature type="mutagenesis site" description="Decreased phosphorylation, leading to decreased autoinhibition. Strongly decreased phosphorylation, leading to stongly decreased autoinhibition; when associated with 282-A--A-285." evidence="7">
    <original>S</original>
    <variation>A</variation>
    <location>
        <position position="251"/>
    </location>
</feature>
<feature type="mutagenesis site" description="Does not affect phosphorylation and autoinhibition." evidence="7">
    <original>S</original>
    <variation>A</variation>
    <location>
        <position position="270"/>
    </location>
</feature>
<feature type="mutagenesis site" description="Does not affect phosphorylation and autoinhibition." evidence="7">
    <original>S</original>
    <variation>A</variation>
    <location>
        <position position="273"/>
    </location>
</feature>
<feature type="mutagenesis site" description="Decreased phosphorylation, leading to decreased autoinhibition. Strongly decreased phosphorylation, leading to stongly decreased autoinhibition; when associated with A-251." evidence="7">
    <original>SYDS</original>
    <variation>AYDA</variation>
    <location>
        <begin position="282"/>
        <end position="285"/>
    </location>
</feature>
<feature type="mutagenesis site" description="Reduced autoinhibition." evidence="7">
    <original>L</original>
    <variation>A</variation>
    <location>
        <position position="429"/>
    </location>
</feature>
<feature type="sequence conflict" description="In Ref. 1; AAA63299 and 3; CAA39310." evidence="12" ref="1 3">
    <original>D</original>
    <variation>E</variation>
    <location>
        <position position="28"/>
    </location>
</feature>
<feature type="sequence conflict" description="In Ref. 3; CAA39310." evidence="12" ref="3">
    <original>L</original>
    <variation>S</variation>
    <location>
        <position position="37"/>
    </location>
</feature>
<feature type="sequence conflict" description="In Ref. 3; CAA39310." evidence="12" ref="3">
    <original>AT</original>
    <variation>SY</variation>
    <location>
        <begin position="51"/>
        <end position="52"/>
    </location>
</feature>
<feature type="sequence conflict" description="In Ref. 1; AAA63299." evidence="12" ref="1">
    <original>G</original>
    <variation>P</variation>
    <location>
        <position position="55"/>
    </location>
</feature>
<feature type="sequence conflict" description="In Ref. 3; CAA39310." evidence="12" ref="3">
    <original>L</original>
    <variation>R</variation>
    <location>
        <position position="63"/>
    </location>
</feature>
<feature type="sequence conflict" description="In Ref. 3; CAA39310." evidence="12" ref="3">
    <original>E</original>
    <variation>D</variation>
    <location>
        <position position="74"/>
    </location>
</feature>
<feature type="sequence conflict" description="In Ref. 3; CAA39310." evidence="12" ref="3">
    <original>Q</original>
    <variation>H</variation>
    <location>
        <position position="96"/>
    </location>
</feature>
<feature type="sequence conflict" description="In Ref. 3; CAA39310." evidence="12" ref="3">
    <original>L</original>
    <variation>V</variation>
    <location>
        <position position="105"/>
    </location>
</feature>
<feature type="sequence conflict" description="In Ref. 3; CAA39310." evidence="12" ref="3">
    <original>D</original>
    <variation>V</variation>
    <location>
        <position position="157"/>
    </location>
</feature>
<feature type="sequence conflict" description="In Ref. 3; CAA39310." evidence="12" ref="3">
    <original>Q</original>
    <variation>R</variation>
    <location>
        <position position="211"/>
    </location>
</feature>
<feature type="sequence conflict" description="In Ref. 3; CAA39310." evidence="12" ref="3">
    <original>D</original>
    <variation>E</variation>
    <location>
        <position position="217"/>
    </location>
</feature>
<feature type="sequence conflict" description="In Ref. 3; CAA39310." evidence="12" ref="3">
    <original>A</original>
    <variation>R</variation>
    <location>
        <position position="225"/>
    </location>
</feature>
<feature type="sequence conflict" description="In Ref. 3; CAA39310." evidence="12" ref="3">
    <original>D</original>
    <variation>N</variation>
    <location>
        <position position="234"/>
    </location>
</feature>
<feature type="sequence conflict" description="In Ref. 3; CAA39310." evidence="12" ref="3">
    <original>G</original>
    <variation>C</variation>
    <location>
        <position position="360"/>
    </location>
</feature>
<feature type="sequence conflict" description="In Ref. 3; CAA39310." evidence="12" ref="3">
    <original>K</original>
    <variation>S</variation>
    <location>
        <position position="383"/>
    </location>
</feature>
<feature type="sequence conflict" description="In Ref. 3; CAA39310." evidence="12" ref="3">
    <original>G</original>
    <variation>A</variation>
    <location>
        <position position="392"/>
    </location>
</feature>
<feature type="sequence conflict" description="In Ref. 3; CAA39310." evidence="12" ref="3">
    <original>KR</original>
    <variation>NA</variation>
    <location>
        <begin position="408"/>
        <end position="409"/>
    </location>
</feature>
<feature type="sequence conflict" description="In Ref. 3; CAA39310." evidence="12" ref="3">
    <original>R</original>
    <variation>A</variation>
    <location>
        <position position="413"/>
    </location>
</feature>
<feature type="turn" evidence="18">
    <location>
        <begin position="39"/>
        <end position="42"/>
    </location>
</feature>
<feature type="helix" evidence="18">
    <location>
        <begin position="43"/>
        <end position="52"/>
    </location>
</feature>
<feature type="helix" evidence="18">
    <location>
        <begin position="54"/>
        <end position="62"/>
    </location>
</feature>
<feature type="strand" evidence="18">
    <location>
        <begin position="67"/>
        <end position="69"/>
    </location>
</feature>
<feature type="helix" evidence="18">
    <location>
        <begin position="74"/>
        <end position="88"/>
    </location>
</feature>
<feature type="turn" evidence="18">
    <location>
        <begin position="95"/>
        <end position="98"/>
    </location>
</feature>
<feature type="helix" evidence="18">
    <location>
        <begin position="102"/>
        <end position="107"/>
    </location>
</feature>
<feature type="helix" evidence="18">
    <location>
        <begin position="109"/>
        <end position="116"/>
    </location>
</feature>
<feature type="helix" evidence="18">
    <location>
        <begin position="119"/>
        <end position="134"/>
    </location>
</feature>
<feature type="helix" evidence="16">
    <location>
        <begin position="304"/>
        <end position="312"/>
    </location>
</feature>
<feature type="turn" evidence="16">
    <location>
        <begin position="313"/>
        <end position="315"/>
    </location>
</feature>
<feature type="strand" evidence="17">
    <location>
        <begin position="318"/>
        <end position="321"/>
    </location>
</feature>
<feature type="helix" evidence="16">
    <location>
        <begin position="323"/>
        <end position="330"/>
    </location>
</feature>
<feature type="helix" evidence="16">
    <location>
        <begin position="337"/>
        <end position="345"/>
    </location>
</feature>
<feature type="helix" evidence="16">
    <location>
        <begin position="348"/>
        <end position="350"/>
    </location>
</feature>
<feature type="turn" evidence="16">
    <location>
        <begin position="351"/>
        <end position="353"/>
    </location>
</feature>
<feature type="strand" evidence="15">
    <location>
        <begin position="354"/>
        <end position="356"/>
    </location>
</feature>
<feature type="strand" evidence="16">
    <location>
        <begin position="362"/>
        <end position="364"/>
    </location>
</feature>
<feature type="helix" evidence="16">
    <location>
        <begin position="368"/>
        <end position="379"/>
    </location>
</feature>
<feature type="helix" evidence="16">
    <location>
        <begin position="386"/>
        <end position="395"/>
    </location>
</feature>
<feature type="turn" evidence="16">
    <location>
        <begin position="396"/>
        <end position="400"/>
    </location>
</feature>
<feature type="strand" evidence="16">
    <location>
        <begin position="401"/>
        <end position="404"/>
    </location>
</feature>
<feature type="strand" evidence="16">
    <location>
        <begin position="408"/>
        <end position="414"/>
    </location>
</feature>
<feature type="helix" evidence="16">
    <location>
        <begin position="418"/>
        <end position="422"/>
    </location>
</feature>
<feature type="helix" evidence="16">
    <location>
        <begin position="426"/>
        <end position="432"/>
    </location>
</feature>